<name>IBPA_ECOLU</name>
<gene>
    <name evidence="1" type="primary">ibpA</name>
    <name type="ordered locus">ECUMN_4218</name>
</gene>
<dbReference type="EMBL" id="CU928163">
    <property type="protein sequence ID" value="CAR15358.1"/>
    <property type="molecule type" value="Genomic_DNA"/>
</dbReference>
<dbReference type="RefSeq" id="WP_001243437.1">
    <property type="nucleotide sequence ID" value="NC_011751.1"/>
</dbReference>
<dbReference type="RefSeq" id="YP_002414852.1">
    <property type="nucleotide sequence ID" value="NC_011751.1"/>
</dbReference>
<dbReference type="SMR" id="B7NF04"/>
<dbReference type="STRING" id="585056.ECUMN_4218"/>
<dbReference type="GeneID" id="93778428"/>
<dbReference type="KEGG" id="eum:ECUMN_4218"/>
<dbReference type="PATRIC" id="fig|585056.7.peg.4390"/>
<dbReference type="HOGENOM" id="CLU_046737_4_2_6"/>
<dbReference type="Proteomes" id="UP000007097">
    <property type="component" value="Chromosome"/>
</dbReference>
<dbReference type="GO" id="GO:0005737">
    <property type="term" value="C:cytoplasm"/>
    <property type="evidence" value="ECO:0007669"/>
    <property type="project" value="UniProtKB-SubCell"/>
</dbReference>
<dbReference type="GO" id="GO:0050821">
    <property type="term" value="P:protein stabilization"/>
    <property type="evidence" value="ECO:0007669"/>
    <property type="project" value="UniProtKB-UniRule"/>
</dbReference>
<dbReference type="CDD" id="cd06470">
    <property type="entry name" value="ACD_IbpA-B_like"/>
    <property type="match status" value="1"/>
</dbReference>
<dbReference type="FunFam" id="2.60.40.790:FF:000002">
    <property type="entry name" value="Small heat shock protein IbpA"/>
    <property type="match status" value="1"/>
</dbReference>
<dbReference type="Gene3D" id="2.60.40.790">
    <property type="match status" value="1"/>
</dbReference>
<dbReference type="HAMAP" id="MF_02000">
    <property type="entry name" value="HSP20_IbpA"/>
    <property type="match status" value="1"/>
</dbReference>
<dbReference type="InterPro" id="IPR002068">
    <property type="entry name" value="A-crystallin/Hsp20_dom"/>
</dbReference>
<dbReference type="InterPro" id="IPR037913">
    <property type="entry name" value="ACD_IbpA/B"/>
</dbReference>
<dbReference type="InterPro" id="IPR008978">
    <property type="entry name" value="HSP20-like_chaperone"/>
</dbReference>
<dbReference type="InterPro" id="IPR023728">
    <property type="entry name" value="HSP20_IbpA"/>
</dbReference>
<dbReference type="NCBIfam" id="NF008013">
    <property type="entry name" value="PRK10743.1"/>
    <property type="match status" value="1"/>
</dbReference>
<dbReference type="PANTHER" id="PTHR47062">
    <property type="match status" value="1"/>
</dbReference>
<dbReference type="PANTHER" id="PTHR47062:SF1">
    <property type="entry name" value="SMALL HEAT SHOCK PROTEIN IBPA"/>
    <property type="match status" value="1"/>
</dbReference>
<dbReference type="Pfam" id="PF00011">
    <property type="entry name" value="HSP20"/>
    <property type="match status" value="1"/>
</dbReference>
<dbReference type="SUPFAM" id="SSF49764">
    <property type="entry name" value="HSP20-like chaperones"/>
    <property type="match status" value="1"/>
</dbReference>
<dbReference type="PROSITE" id="PS01031">
    <property type="entry name" value="SHSP"/>
    <property type="match status" value="1"/>
</dbReference>
<protein>
    <recommendedName>
        <fullName evidence="1">Small heat shock protein IbpA</fullName>
    </recommendedName>
    <alternativeName>
        <fullName evidence="1">16 kDa heat shock protein A</fullName>
    </alternativeName>
</protein>
<accession>B7NF04</accession>
<evidence type="ECO:0000255" key="1">
    <source>
        <dbReference type="HAMAP-Rule" id="MF_02000"/>
    </source>
</evidence>
<evidence type="ECO:0000255" key="2">
    <source>
        <dbReference type="PROSITE-ProRule" id="PRU00285"/>
    </source>
</evidence>
<comment type="function">
    <text evidence="1">Associates with aggregated proteins, together with IbpB, to stabilize and protect them from irreversible denaturation and extensive proteolysis during heat shock and oxidative stress. Aggregated proteins bound to the IbpAB complex are more efficiently refolded and reactivated by the ATP-dependent chaperone systems ClpB and DnaK/DnaJ/GrpE. Its activity is ATP-independent.</text>
</comment>
<comment type="subunit">
    <text evidence="1">Monomer. Forms homomultimers of about 100-150 subunits at optimal growth temperatures. Conformation changes to monomers at high temperatures or high ionic concentrations.</text>
</comment>
<comment type="subcellular location">
    <subcellularLocation>
        <location evidence="1">Cytoplasm</location>
    </subcellularLocation>
</comment>
<comment type="similarity">
    <text evidence="1 2">Belongs to the small heat shock protein (HSP20) family.</text>
</comment>
<organism>
    <name type="scientific">Escherichia coli O17:K52:H18 (strain UMN026 / ExPEC)</name>
    <dbReference type="NCBI Taxonomy" id="585056"/>
    <lineage>
        <taxon>Bacteria</taxon>
        <taxon>Pseudomonadati</taxon>
        <taxon>Pseudomonadota</taxon>
        <taxon>Gammaproteobacteria</taxon>
        <taxon>Enterobacterales</taxon>
        <taxon>Enterobacteriaceae</taxon>
        <taxon>Escherichia</taxon>
    </lineage>
</organism>
<keyword id="KW-0143">Chaperone</keyword>
<keyword id="KW-0963">Cytoplasm</keyword>
<keyword id="KW-0346">Stress response</keyword>
<reference key="1">
    <citation type="journal article" date="2009" name="PLoS Genet.">
        <title>Organised genome dynamics in the Escherichia coli species results in highly diverse adaptive paths.</title>
        <authorList>
            <person name="Touchon M."/>
            <person name="Hoede C."/>
            <person name="Tenaillon O."/>
            <person name="Barbe V."/>
            <person name="Baeriswyl S."/>
            <person name="Bidet P."/>
            <person name="Bingen E."/>
            <person name="Bonacorsi S."/>
            <person name="Bouchier C."/>
            <person name="Bouvet O."/>
            <person name="Calteau A."/>
            <person name="Chiapello H."/>
            <person name="Clermont O."/>
            <person name="Cruveiller S."/>
            <person name="Danchin A."/>
            <person name="Diard M."/>
            <person name="Dossat C."/>
            <person name="Karoui M.E."/>
            <person name="Frapy E."/>
            <person name="Garry L."/>
            <person name="Ghigo J.M."/>
            <person name="Gilles A.M."/>
            <person name="Johnson J."/>
            <person name="Le Bouguenec C."/>
            <person name="Lescat M."/>
            <person name="Mangenot S."/>
            <person name="Martinez-Jehanne V."/>
            <person name="Matic I."/>
            <person name="Nassif X."/>
            <person name="Oztas S."/>
            <person name="Petit M.A."/>
            <person name="Pichon C."/>
            <person name="Rouy Z."/>
            <person name="Ruf C.S."/>
            <person name="Schneider D."/>
            <person name="Tourret J."/>
            <person name="Vacherie B."/>
            <person name="Vallenet D."/>
            <person name="Medigue C."/>
            <person name="Rocha E.P.C."/>
            <person name="Denamur E."/>
        </authorList>
    </citation>
    <scope>NUCLEOTIDE SEQUENCE [LARGE SCALE GENOMIC DNA]</scope>
    <source>
        <strain>UMN026 / ExPEC</strain>
    </source>
</reference>
<sequence>MRNFDLSPLYRSAIGFDRLFNHLENNQSQSNGGYPPYNVELVDENHYRIAIAVAGFAESELEITAQDNLLVVKGAHADEQKERTYLYQGIAERNFERKFQLAENIHVRGANLVNGLLYIDLERVIPEAKKPRRIEIN</sequence>
<proteinExistence type="inferred from homology"/>
<feature type="chain" id="PRO_1000189084" description="Small heat shock protein IbpA">
    <location>
        <begin position="1"/>
        <end position="137"/>
    </location>
</feature>
<feature type="domain" description="sHSP" evidence="2">
    <location>
        <begin position="28"/>
        <end position="137"/>
    </location>
</feature>